<sequence length="43" mass="5271">MNITQYEKLKQHLSDEDTGPFTLNEFSFYMKEDDRYIHIPVFE</sequence>
<reference key="1">
    <citation type="journal article" date="1997" name="Nature">
        <title>The complete genome sequence of the Gram-positive bacterium Bacillus subtilis.</title>
        <authorList>
            <person name="Kunst F."/>
            <person name="Ogasawara N."/>
            <person name="Moszer I."/>
            <person name="Albertini A.M."/>
            <person name="Alloni G."/>
            <person name="Azevedo V."/>
            <person name="Bertero M.G."/>
            <person name="Bessieres P."/>
            <person name="Bolotin A."/>
            <person name="Borchert S."/>
            <person name="Borriss R."/>
            <person name="Boursier L."/>
            <person name="Brans A."/>
            <person name="Braun M."/>
            <person name="Brignell S.C."/>
            <person name="Bron S."/>
            <person name="Brouillet S."/>
            <person name="Bruschi C.V."/>
            <person name="Caldwell B."/>
            <person name="Capuano V."/>
            <person name="Carter N.M."/>
            <person name="Choi S.-K."/>
            <person name="Codani J.-J."/>
            <person name="Connerton I.F."/>
            <person name="Cummings N.J."/>
            <person name="Daniel R.A."/>
            <person name="Denizot F."/>
            <person name="Devine K.M."/>
            <person name="Duesterhoeft A."/>
            <person name="Ehrlich S.D."/>
            <person name="Emmerson P.T."/>
            <person name="Entian K.-D."/>
            <person name="Errington J."/>
            <person name="Fabret C."/>
            <person name="Ferrari E."/>
            <person name="Foulger D."/>
            <person name="Fritz C."/>
            <person name="Fujita M."/>
            <person name="Fujita Y."/>
            <person name="Fuma S."/>
            <person name="Galizzi A."/>
            <person name="Galleron N."/>
            <person name="Ghim S.-Y."/>
            <person name="Glaser P."/>
            <person name="Goffeau A."/>
            <person name="Golightly E.J."/>
            <person name="Grandi G."/>
            <person name="Guiseppi G."/>
            <person name="Guy B.J."/>
            <person name="Haga K."/>
            <person name="Haiech J."/>
            <person name="Harwood C.R."/>
            <person name="Henaut A."/>
            <person name="Hilbert H."/>
            <person name="Holsappel S."/>
            <person name="Hosono S."/>
            <person name="Hullo M.-F."/>
            <person name="Itaya M."/>
            <person name="Jones L.-M."/>
            <person name="Joris B."/>
            <person name="Karamata D."/>
            <person name="Kasahara Y."/>
            <person name="Klaerr-Blanchard M."/>
            <person name="Klein C."/>
            <person name="Kobayashi Y."/>
            <person name="Koetter P."/>
            <person name="Koningstein G."/>
            <person name="Krogh S."/>
            <person name="Kumano M."/>
            <person name="Kurita K."/>
            <person name="Lapidus A."/>
            <person name="Lardinois S."/>
            <person name="Lauber J."/>
            <person name="Lazarevic V."/>
            <person name="Lee S.-M."/>
            <person name="Levine A."/>
            <person name="Liu H."/>
            <person name="Masuda S."/>
            <person name="Mauel C."/>
            <person name="Medigue C."/>
            <person name="Medina N."/>
            <person name="Mellado R.P."/>
            <person name="Mizuno M."/>
            <person name="Moestl D."/>
            <person name="Nakai S."/>
            <person name="Noback M."/>
            <person name="Noone D."/>
            <person name="O'Reilly M."/>
            <person name="Ogawa K."/>
            <person name="Ogiwara A."/>
            <person name="Oudega B."/>
            <person name="Park S.-H."/>
            <person name="Parro V."/>
            <person name="Pohl T.M."/>
            <person name="Portetelle D."/>
            <person name="Porwollik S."/>
            <person name="Prescott A.M."/>
            <person name="Presecan E."/>
            <person name="Pujic P."/>
            <person name="Purnelle B."/>
            <person name="Rapoport G."/>
            <person name="Rey M."/>
            <person name="Reynolds S."/>
            <person name="Rieger M."/>
            <person name="Rivolta C."/>
            <person name="Rocha E."/>
            <person name="Roche B."/>
            <person name="Rose M."/>
            <person name="Sadaie Y."/>
            <person name="Sato T."/>
            <person name="Scanlan E."/>
            <person name="Schleich S."/>
            <person name="Schroeter R."/>
            <person name="Scoffone F."/>
            <person name="Sekiguchi J."/>
            <person name="Sekowska A."/>
            <person name="Seror S.J."/>
            <person name="Serror P."/>
            <person name="Shin B.-S."/>
            <person name="Soldo B."/>
            <person name="Sorokin A."/>
            <person name="Tacconi E."/>
            <person name="Takagi T."/>
            <person name="Takahashi H."/>
            <person name="Takemaru K."/>
            <person name="Takeuchi M."/>
            <person name="Tamakoshi A."/>
            <person name="Tanaka T."/>
            <person name="Terpstra P."/>
            <person name="Tognoni A."/>
            <person name="Tosato V."/>
            <person name="Uchiyama S."/>
            <person name="Vandenbol M."/>
            <person name="Vannier F."/>
            <person name="Vassarotti A."/>
            <person name="Viari A."/>
            <person name="Wambutt R."/>
            <person name="Wedler E."/>
            <person name="Wedler H."/>
            <person name="Weitzenegger T."/>
            <person name="Winters P."/>
            <person name="Wipat A."/>
            <person name="Yamamoto H."/>
            <person name="Yamane K."/>
            <person name="Yasumoto K."/>
            <person name="Yata K."/>
            <person name="Yoshida K."/>
            <person name="Yoshikawa H.-F."/>
            <person name="Zumstein E."/>
            <person name="Yoshikawa H."/>
            <person name="Danchin A."/>
        </authorList>
    </citation>
    <scope>NUCLEOTIDE SEQUENCE [LARGE SCALE GENOMIC DNA]</scope>
    <source>
        <strain>168</strain>
    </source>
</reference>
<proteinExistence type="predicted"/>
<name>YXZJ_BACSU</name>
<organism>
    <name type="scientific">Bacillus subtilis (strain 168)</name>
    <dbReference type="NCBI Taxonomy" id="224308"/>
    <lineage>
        <taxon>Bacteria</taxon>
        <taxon>Bacillati</taxon>
        <taxon>Bacillota</taxon>
        <taxon>Bacilli</taxon>
        <taxon>Bacillales</taxon>
        <taxon>Bacillaceae</taxon>
        <taxon>Bacillus</taxon>
    </lineage>
</organism>
<keyword id="KW-1185">Reference proteome</keyword>
<dbReference type="EMBL" id="AL009126">
    <property type="protein sequence ID" value="CAX52711.1"/>
    <property type="molecule type" value="Genomic_DNA"/>
</dbReference>
<dbReference type="RefSeq" id="WP_003227186.1">
    <property type="nucleotide sequence ID" value="NZ_OZ025638.1"/>
</dbReference>
<dbReference type="RefSeq" id="YP_003097796.1">
    <property type="nucleotide sequence ID" value="NC_000964.3"/>
</dbReference>
<dbReference type="FunCoup" id="C0H3T5">
    <property type="interactions" value="11"/>
</dbReference>
<dbReference type="STRING" id="224308.BSU39139"/>
<dbReference type="PaxDb" id="224308-BSU39139"/>
<dbReference type="EnsemblBacteria" id="CAX52711">
    <property type="protein sequence ID" value="CAX52711"/>
    <property type="gene ID" value="BSU_39139"/>
</dbReference>
<dbReference type="GeneID" id="8303069"/>
<dbReference type="KEGG" id="bsu:BSU39139"/>
<dbReference type="PATRIC" id="fig|224308.179.peg.4237"/>
<dbReference type="InParanoid" id="C0H3T5"/>
<dbReference type="OrthoDB" id="2890581at2"/>
<dbReference type="BioCyc" id="BSUB:BSU39139-MONOMER"/>
<dbReference type="Proteomes" id="UP000001570">
    <property type="component" value="Chromosome"/>
</dbReference>
<protein>
    <recommendedName>
        <fullName>Uncharacterized protein YxzJ</fullName>
    </recommendedName>
</protein>
<feature type="chain" id="PRO_0000382680" description="Uncharacterized protein YxzJ">
    <location>
        <begin position="1"/>
        <end position="43"/>
    </location>
</feature>
<gene>
    <name type="primary">yxzJ</name>
    <name type="ordered locus">BSU39139</name>
</gene>
<accession>C0H3T5</accession>